<keyword id="KW-1003">Cell membrane</keyword>
<keyword id="KW-0868">Chloride</keyword>
<keyword id="KW-0869">Chloride channel</keyword>
<keyword id="KW-0407">Ion channel</keyword>
<keyword id="KW-0406">Ion transport</keyword>
<keyword id="KW-0472">Membrane</keyword>
<keyword id="KW-1185">Reference proteome</keyword>
<keyword id="KW-0812">Transmembrane</keyword>
<keyword id="KW-1133">Transmembrane helix</keyword>
<keyword id="KW-0813">Transport</keyword>
<gene>
    <name type="primary">best-12</name>
    <name type="ORF">F14H3.2</name>
</gene>
<comment type="function">
    <text evidence="1">Forms chloride channels.</text>
</comment>
<comment type="subunit">
    <text evidence="1">Forms oligomers.</text>
</comment>
<comment type="subcellular location">
    <subcellularLocation>
        <location evidence="1">Cell membrane</location>
        <topology evidence="1">Multi-pass membrane protein</topology>
    </subcellularLocation>
</comment>
<comment type="similarity">
    <text evidence="3">Belongs to the anion channel-forming bestrophin (TC 1.A.46) family. Calcium-sensitive chloride channel subfamily.</text>
</comment>
<proteinExistence type="inferred from homology"/>
<name>BST12_CAEEL</name>
<dbReference type="EMBL" id="Z83105">
    <property type="protein sequence ID" value="CAB05483.1"/>
    <property type="molecule type" value="Genomic_DNA"/>
</dbReference>
<dbReference type="PIR" id="T20922">
    <property type="entry name" value="T20922"/>
</dbReference>
<dbReference type="RefSeq" id="NP_507036.1">
    <property type="nucleotide sequence ID" value="NM_074635.3"/>
</dbReference>
<dbReference type="SMR" id="O45363"/>
<dbReference type="FunCoup" id="O45363">
    <property type="interactions" value="1"/>
</dbReference>
<dbReference type="STRING" id="6239.F14H3.2.1"/>
<dbReference type="PaxDb" id="6239-F14H3.2"/>
<dbReference type="EnsemblMetazoa" id="F14H3.2.1">
    <property type="protein sequence ID" value="F14H3.2.1"/>
    <property type="gene ID" value="WBGene00008821"/>
</dbReference>
<dbReference type="EnsemblMetazoa" id="F14H3.2.2">
    <property type="protein sequence ID" value="F14H3.2.2"/>
    <property type="gene ID" value="WBGene00008821"/>
</dbReference>
<dbReference type="GeneID" id="184489"/>
<dbReference type="KEGG" id="cel:CELE_F14H3.2"/>
<dbReference type="UCSC" id="F14H3.2">
    <property type="organism name" value="c. elegans"/>
</dbReference>
<dbReference type="AGR" id="WB:WBGene00008821"/>
<dbReference type="CTD" id="184489"/>
<dbReference type="WormBase" id="F14H3.2">
    <property type="protein sequence ID" value="CE15827"/>
    <property type="gene ID" value="WBGene00008821"/>
    <property type="gene designation" value="best-12"/>
</dbReference>
<dbReference type="eggNOG" id="KOG3547">
    <property type="taxonomic scope" value="Eukaryota"/>
</dbReference>
<dbReference type="GeneTree" id="ENSGT00970000195944"/>
<dbReference type="HOGENOM" id="CLU_018069_7_1_1"/>
<dbReference type="InParanoid" id="O45363"/>
<dbReference type="OMA" id="WILTFRI"/>
<dbReference type="OrthoDB" id="201595at2759"/>
<dbReference type="PhylomeDB" id="O45363"/>
<dbReference type="PRO" id="PR:O45363"/>
<dbReference type="Proteomes" id="UP000001940">
    <property type="component" value="Chromosome V"/>
</dbReference>
<dbReference type="Bgee" id="WBGene00008821">
    <property type="expression patterns" value="Expressed in material anatomical entity and 2 other cell types or tissues"/>
</dbReference>
<dbReference type="GO" id="GO:0034707">
    <property type="term" value="C:chloride channel complex"/>
    <property type="evidence" value="ECO:0007669"/>
    <property type="project" value="UniProtKB-KW"/>
</dbReference>
<dbReference type="GO" id="GO:0005886">
    <property type="term" value="C:plasma membrane"/>
    <property type="evidence" value="ECO:0007669"/>
    <property type="project" value="UniProtKB-SubCell"/>
</dbReference>
<dbReference type="GO" id="GO:0005254">
    <property type="term" value="F:chloride channel activity"/>
    <property type="evidence" value="ECO:0000318"/>
    <property type="project" value="GO_Central"/>
</dbReference>
<dbReference type="InterPro" id="IPR000615">
    <property type="entry name" value="Bestrophin"/>
</dbReference>
<dbReference type="InterPro" id="IPR021134">
    <property type="entry name" value="Bestrophin-like"/>
</dbReference>
<dbReference type="PANTHER" id="PTHR10736">
    <property type="entry name" value="BESTROPHIN"/>
    <property type="match status" value="1"/>
</dbReference>
<dbReference type="PANTHER" id="PTHR10736:SF58">
    <property type="entry name" value="BESTROPHIN HOMOLOG-RELATED"/>
    <property type="match status" value="1"/>
</dbReference>
<dbReference type="Pfam" id="PF01062">
    <property type="entry name" value="Bestrophin"/>
    <property type="match status" value="1"/>
</dbReference>
<sequence length="434" mass="50338">MTIPYLADLKDQTECKTCPKILTRCKGSLYKVILHEFLMTAGAYFGVFLVFRFAINETQREYAAEVFKKLKEQQNVCIPMQMMLAFFIATVADQWEKIFENVGYIENAALAVATFLPDGKEKRDNNGNVILAKVDNSNVRRNIIRYLVLSQILGIRDVSELVKKRFANYDMIKATGVLQDHEEPLLKKVPCKTYAESFVPITWIMSILQKFASKNEENLYYDTVYLEITDFYKKIIKLTRYDLIPIPLAYPQAVFLAVRIYFFFCLFTRQHLDLEENWALSHWGFPLLTTLQFIFLVGCMKVAEILLNPMGQDDENFECNYVMDKNLFVGLTIVSSEHTECPELEEVIGDDYVPWYPDDCKSKEEKNQEELKKYLESVDFQAVTSSDQGENDEVSTMMKVEQNSLLVCGREKFYEGGGFRNSDVYPKQRANYPH</sequence>
<accession>O45363</accession>
<organism>
    <name type="scientific">Caenorhabditis elegans</name>
    <dbReference type="NCBI Taxonomy" id="6239"/>
    <lineage>
        <taxon>Eukaryota</taxon>
        <taxon>Metazoa</taxon>
        <taxon>Ecdysozoa</taxon>
        <taxon>Nematoda</taxon>
        <taxon>Chromadorea</taxon>
        <taxon>Rhabditida</taxon>
        <taxon>Rhabditina</taxon>
        <taxon>Rhabditomorpha</taxon>
        <taxon>Rhabditoidea</taxon>
        <taxon>Rhabditidae</taxon>
        <taxon>Peloderinae</taxon>
        <taxon>Caenorhabditis</taxon>
    </lineage>
</organism>
<protein>
    <recommendedName>
        <fullName>Bestrophin homolog 12</fullName>
    </recommendedName>
</protein>
<reference key="1">
    <citation type="journal article" date="1998" name="Science">
        <title>Genome sequence of the nematode C. elegans: a platform for investigating biology.</title>
        <authorList>
            <consortium name="The C. elegans sequencing consortium"/>
        </authorList>
    </citation>
    <scope>NUCLEOTIDE SEQUENCE [LARGE SCALE GENOMIC DNA]</scope>
    <source>
        <strain>Bristol N2</strain>
    </source>
</reference>
<evidence type="ECO:0000250" key="1"/>
<evidence type="ECO:0000255" key="2"/>
<evidence type="ECO:0000305" key="3"/>
<feature type="chain" id="PRO_0000143129" description="Bestrophin homolog 12">
    <location>
        <begin position="1"/>
        <end position="434"/>
    </location>
</feature>
<feature type="transmembrane region" description="Helical" evidence="2">
    <location>
        <begin position="31"/>
        <end position="51"/>
    </location>
</feature>
<feature type="transmembrane region" description="Helical" evidence="2">
    <location>
        <begin position="76"/>
        <end position="96"/>
    </location>
</feature>
<feature type="transmembrane region" description="Helical" evidence="2">
    <location>
        <begin position="244"/>
        <end position="264"/>
    </location>
</feature>
<feature type="transmembrane region" description="Helical" evidence="2">
    <location>
        <begin position="278"/>
        <end position="298"/>
    </location>
</feature>